<keyword id="KW-0028">Amino-acid biosynthesis</keyword>
<keyword id="KW-0057">Aromatic amino acid biosynthesis</keyword>
<keyword id="KW-0963">Cytoplasm</keyword>
<keyword id="KW-0808">Transferase</keyword>
<gene>
    <name evidence="1" type="primary">aroA</name>
    <name type="ordered locus">SeSA_A1091</name>
</gene>
<reference key="1">
    <citation type="journal article" date="2011" name="J. Bacteriol.">
        <title>Comparative genomics of 28 Salmonella enterica isolates: evidence for CRISPR-mediated adaptive sublineage evolution.</title>
        <authorList>
            <person name="Fricke W.F."/>
            <person name="Mammel M.K."/>
            <person name="McDermott P.F."/>
            <person name="Tartera C."/>
            <person name="White D.G."/>
            <person name="Leclerc J.E."/>
            <person name="Ravel J."/>
            <person name="Cebula T.A."/>
        </authorList>
    </citation>
    <scope>NUCLEOTIDE SEQUENCE [LARGE SCALE GENOMIC DNA]</scope>
    <source>
        <strain>CVM19633</strain>
    </source>
</reference>
<protein>
    <recommendedName>
        <fullName evidence="1">3-phosphoshikimate 1-carboxyvinyltransferase</fullName>
        <ecNumber evidence="1">2.5.1.19</ecNumber>
    </recommendedName>
    <alternativeName>
        <fullName evidence="1">5-enolpyruvylshikimate-3-phosphate synthase</fullName>
        <shortName evidence="1">EPSP synthase</shortName>
        <shortName evidence="1">EPSPS</shortName>
    </alternativeName>
</protein>
<proteinExistence type="inferred from homology"/>
<sequence>MESLTLQPIARVDGAINLPGSKSVSNRALLLAALACGKTVLTNLLDSDDVRHMLNALSALGINYTLSADRTRCDITGNGGALRAPGALELFLGNAGTAMRPLAAALCLGQNEIVLTGEPRMKERPIGHLVDSLRQGGANIDYLEQENYPPLRLRGGFTGGEIEVDGSVSSQFLTALLMTAPLAPEDTTIRVKGELVSKPYIDITLNLMKTFGVEIANHHYQQFVVKGGQQYHSPGRYLVEGDASSASYFLAAGAIKGGTVKVTGIGRKSMQGDIRFADVLEKMGATITWGDDFIACTRGELHAIDMDMNHIPDAAMTIATTALFAKGTTTLRNIYNWRVKETDRLFAMATELRKVGAEVEEGHDYIRITPPAKLHHADIGTYNDHRMAMCFSLVALSDTPVTILDPKCTAKTFPDYFEQLARMSTPA</sequence>
<accession>B4TRT9</accession>
<comment type="function">
    <text evidence="1">Catalyzes the transfer of the enolpyruvyl moiety of phosphoenolpyruvate (PEP) to the 5-hydroxyl of shikimate-3-phosphate (S3P) to produce enolpyruvyl shikimate-3-phosphate and inorganic phosphate.</text>
</comment>
<comment type="catalytic activity">
    <reaction evidence="1">
        <text>3-phosphoshikimate + phosphoenolpyruvate = 5-O-(1-carboxyvinyl)-3-phosphoshikimate + phosphate</text>
        <dbReference type="Rhea" id="RHEA:21256"/>
        <dbReference type="ChEBI" id="CHEBI:43474"/>
        <dbReference type="ChEBI" id="CHEBI:57701"/>
        <dbReference type="ChEBI" id="CHEBI:58702"/>
        <dbReference type="ChEBI" id="CHEBI:145989"/>
        <dbReference type="EC" id="2.5.1.19"/>
    </reaction>
    <physiologicalReaction direction="left-to-right" evidence="1">
        <dbReference type="Rhea" id="RHEA:21257"/>
    </physiologicalReaction>
</comment>
<comment type="pathway">
    <text evidence="1">Metabolic intermediate biosynthesis; chorismate biosynthesis; chorismate from D-erythrose 4-phosphate and phosphoenolpyruvate: step 6/7.</text>
</comment>
<comment type="subunit">
    <text evidence="1">Monomer.</text>
</comment>
<comment type="subcellular location">
    <subcellularLocation>
        <location evidence="1">Cytoplasm</location>
    </subcellularLocation>
</comment>
<comment type="similarity">
    <text evidence="1">Belongs to the EPSP synthase family.</text>
</comment>
<organism>
    <name type="scientific">Salmonella schwarzengrund (strain CVM19633)</name>
    <dbReference type="NCBI Taxonomy" id="439843"/>
    <lineage>
        <taxon>Bacteria</taxon>
        <taxon>Pseudomonadati</taxon>
        <taxon>Pseudomonadota</taxon>
        <taxon>Gammaproteobacteria</taxon>
        <taxon>Enterobacterales</taxon>
        <taxon>Enterobacteriaceae</taxon>
        <taxon>Salmonella</taxon>
    </lineage>
</organism>
<dbReference type="EC" id="2.5.1.19" evidence="1"/>
<dbReference type="EMBL" id="CP001127">
    <property type="protein sequence ID" value="ACF92120.1"/>
    <property type="molecule type" value="Genomic_DNA"/>
</dbReference>
<dbReference type="RefSeq" id="WP_000445192.1">
    <property type="nucleotide sequence ID" value="NC_011094.1"/>
</dbReference>
<dbReference type="SMR" id="B4TRT9"/>
<dbReference type="KEGG" id="sew:SeSA_A1091"/>
<dbReference type="HOGENOM" id="CLU_024321_0_0_6"/>
<dbReference type="UniPathway" id="UPA00053">
    <property type="reaction ID" value="UER00089"/>
</dbReference>
<dbReference type="Proteomes" id="UP000001865">
    <property type="component" value="Chromosome"/>
</dbReference>
<dbReference type="GO" id="GO:0005737">
    <property type="term" value="C:cytoplasm"/>
    <property type="evidence" value="ECO:0007669"/>
    <property type="project" value="UniProtKB-SubCell"/>
</dbReference>
<dbReference type="GO" id="GO:0003866">
    <property type="term" value="F:3-phosphoshikimate 1-carboxyvinyltransferase activity"/>
    <property type="evidence" value="ECO:0007669"/>
    <property type="project" value="UniProtKB-UniRule"/>
</dbReference>
<dbReference type="GO" id="GO:0008652">
    <property type="term" value="P:amino acid biosynthetic process"/>
    <property type="evidence" value="ECO:0007669"/>
    <property type="project" value="UniProtKB-KW"/>
</dbReference>
<dbReference type="GO" id="GO:0009073">
    <property type="term" value="P:aromatic amino acid family biosynthetic process"/>
    <property type="evidence" value="ECO:0007669"/>
    <property type="project" value="UniProtKB-KW"/>
</dbReference>
<dbReference type="GO" id="GO:0009423">
    <property type="term" value="P:chorismate biosynthetic process"/>
    <property type="evidence" value="ECO:0007669"/>
    <property type="project" value="UniProtKB-UniRule"/>
</dbReference>
<dbReference type="FunFam" id="3.65.10.10:FF:000003">
    <property type="entry name" value="3-phosphoshikimate 1-carboxyvinyltransferase"/>
    <property type="match status" value="1"/>
</dbReference>
<dbReference type="FunFam" id="3.65.10.10:FF:000004">
    <property type="entry name" value="3-phosphoshikimate 1-carboxyvinyltransferase"/>
    <property type="match status" value="1"/>
</dbReference>
<dbReference type="Gene3D" id="3.65.10.10">
    <property type="entry name" value="Enolpyruvate transferase domain"/>
    <property type="match status" value="2"/>
</dbReference>
<dbReference type="HAMAP" id="MF_00210">
    <property type="entry name" value="EPSP_synth"/>
    <property type="match status" value="1"/>
</dbReference>
<dbReference type="InterPro" id="IPR001986">
    <property type="entry name" value="Enolpyruvate_Tfrase_dom"/>
</dbReference>
<dbReference type="InterPro" id="IPR036968">
    <property type="entry name" value="Enolpyruvate_Tfrase_sf"/>
</dbReference>
<dbReference type="InterPro" id="IPR006264">
    <property type="entry name" value="EPSP_synthase"/>
</dbReference>
<dbReference type="InterPro" id="IPR023193">
    <property type="entry name" value="EPSP_synthase_CS"/>
</dbReference>
<dbReference type="InterPro" id="IPR013792">
    <property type="entry name" value="RNA3'P_cycl/enolpyr_Trfase_a/b"/>
</dbReference>
<dbReference type="NCBIfam" id="TIGR01356">
    <property type="entry name" value="aroA"/>
    <property type="match status" value="1"/>
</dbReference>
<dbReference type="PANTHER" id="PTHR21090">
    <property type="entry name" value="AROM/DEHYDROQUINATE SYNTHASE"/>
    <property type="match status" value="1"/>
</dbReference>
<dbReference type="PANTHER" id="PTHR21090:SF5">
    <property type="entry name" value="PENTAFUNCTIONAL AROM POLYPEPTIDE"/>
    <property type="match status" value="1"/>
</dbReference>
<dbReference type="Pfam" id="PF00275">
    <property type="entry name" value="EPSP_synthase"/>
    <property type="match status" value="1"/>
</dbReference>
<dbReference type="PIRSF" id="PIRSF000505">
    <property type="entry name" value="EPSPS"/>
    <property type="match status" value="1"/>
</dbReference>
<dbReference type="SUPFAM" id="SSF55205">
    <property type="entry name" value="EPT/RTPC-like"/>
    <property type="match status" value="1"/>
</dbReference>
<dbReference type="PROSITE" id="PS00104">
    <property type="entry name" value="EPSP_SYNTHASE_1"/>
    <property type="match status" value="1"/>
</dbReference>
<dbReference type="PROSITE" id="PS00885">
    <property type="entry name" value="EPSP_SYNTHASE_2"/>
    <property type="match status" value="1"/>
</dbReference>
<evidence type="ECO:0000255" key="1">
    <source>
        <dbReference type="HAMAP-Rule" id="MF_00210"/>
    </source>
</evidence>
<feature type="chain" id="PRO_1000099751" description="3-phosphoshikimate 1-carboxyvinyltransferase">
    <location>
        <begin position="1"/>
        <end position="427"/>
    </location>
</feature>
<feature type="active site" description="Proton acceptor" evidence="1">
    <location>
        <position position="313"/>
    </location>
</feature>
<feature type="binding site" evidence="1">
    <location>
        <position position="22"/>
    </location>
    <ligand>
        <name>3-phosphoshikimate</name>
        <dbReference type="ChEBI" id="CHEBI:145989"/>
    </ligand>
</feature>
<feature type="binding site" evidence="1">
    <location>
        <position position="22"/>
    </location>
    <ligand>
        <name>phosphoenolpyruvate</name>
        <dbReference type="ChEBI" id="CHEBI:58702"/>
    </ligand>
</feature>
<feature type="binding site" evidence="1">
    <location>
        <position position="23"/>
    </location>
    <ligand>
        <name>3-phosphoshikimate</name>
        <dbReference type="ChEBI" id="CHEBI:145989"/>
    </ligand>
</feature>
<feature type="binding site" evidence="1">
    <location>
        <position position="27"/>
    </location>
    <ligand>
        <name>3-phosphoshikimate</name>
        <dbReference type="ChEBI" id="CHEBI:145989"/>
    </ligand>
</feature>
<feature type="binding site" evidence="1">
    <location>
        <position position="96"/>
    </location>
    <ligand>
        <name>phosphoenolpyruvate</name>
        <dbReference type="ChEBI" id="CHEBI:58702"/>
    </ligand>
</feature>
<feature type="binding site" evidence="1">
    <location>
        <position position="124"/>
    </location>
    <ligand>
        <name>phosphoenolpyruvate</name>
        <dbReference type="ChEBI" id="CHEBI:58702"/>
    </ligand>
</feature>
<feature type="binding site" evidence="1">
    <location>
        <position position="169"/>
    </location>
    <ligand>
        <name>3-phosphoshikimate</name>
        <dbReference type="ChEBI" id="CHEBI:145989"/>
    </ligand>
</feature>
<feature type="binding site" evidence="1">
    <location>
        <position position="170"/>
    </location>
    <ligand>
        <name>3-phosphoshikimate</name>
        <dbReference type="ChEBI" id="CHEBI:145989"/>
    </ligand>
</feature>
<feature type="binding site" evidence="1">
    <location>
        <position position="171"/>
    </location>
    <ligand>
        <name>3-phosphoshikimate</name>
        <dbReference type="ChEBI" id="CHEBI:145989"/>
    </ligand>
</feature>
<feature type="binding site" evidence="1">
    <location>
        <position position="171"/>
    </location>
    <ligand>
        <name>phosphoenolpyruvate</name>
        <dbReference type="ChEBI" id="CHEBI:58702"/>
    </ligand>
</feature>
<feature type="binding site" evidence="1">
    <location>
        <position position="197"/>
    </location>
    <ligand>
        <name>3-phosphoshikimate</name>
        <dbReference type="ChEBI" id="CHEBI:145989"/>
    </ligand>
</feature>
<feature type="binding site" evidence="1">
    <location>
        <position position="313"/>
    </location>
    <ligand>
        <name>3-phosphoshikimate</name>
        <dbReference type="ChEBI" id="CHEBI:145989"/>
    </ligand>
</feature>
<feature type="binding site" evidence="1">
    <location>
        <position position="336"/>
    </location>
    <ligand>
        <name>3-phosphoshikimate</name>
        <dbReference type="ChEBI" id="CHEBI:145989"/>
    </ligand>
</feature>
<feature type="binding site" evidence="1">
    <location>
        <position position="340"/>
    </location>
    <ligand>
        <name>3-phosphoshikimate</name>
        <dbReference type="ChEBI" id="CHEBI:145989"/>
    </ligand>
</feature>
<feature type="binding site" evidence="1">
    <location>
        <position position="344"/>
    </location>
    <ligand>
        <name>phosphoenolpyruvate</name>
        <dbReference type="ChEBI" id="CHEBI:58702"/>
    </ligand>
</feature>
<feature type="binding site" evidence="1">
    <location>
        <position position="386"/>
    </location>
    <ligand>
        <name>phosphoenolpyruvate</name>
        <dbReference type="ChEBI" id="CHEBI:58702"/>
    </ligand>
</feature>
<feature type="binding site" evidence="1">
    <location>
        <position position="411"/>
    </location>
    <ligand>
        <name>phosphoenolpyruvate</name>
        <dbReference type="ChEBI" id="CHEBI:58702"/>
    </ligand>
</feature>
<name>AROA_SALSV</name>